<comment type="function">
    <text>Probable ATPase of unknown function. Its presence in a non-photosynthetic plant (Epifagus virginiana) and experiments in tobacco indicate that it has an essential function which is probably not related to photosynthesis.</text>
</comment>
<comment type="subcellular location">
    <subcellularLocation>
        <location evidence="1">Plastid</location>
        <location evidence="1">Chloroplast stroma</location>
    </subcellularLocation>
</comment>
<comment type="similarity">
    <text evidence="2">Belongs to the Ycf2 family.</text>
</comment>
<keyword id="KW-0067">ATP-binding</keyword>
<keyword id="KW-0150">Chloroplast</keyword>
<keyword id="KW-0547">Nucleotide-binding</keyword>
<keyword id="KW-0934">Plastid</keyword>
<sequence length="121" mass="14529">DPFGSVFSHQEFSPDEEMSRILLTSQTQKIDWKYLNKPWFRKNMQEQNFKLLIDRQRWFRTNSSVSNEFFRSNTLYESYQYLSNLFLSNGTLLAQLTKTLLRKNGFPSEWLCTLSNNERLV</sequence>
<geneLocation type="chloroplast"/>
<feature type="chain" id="PRO_0000223072" description="Protein Ycf2">
    <location>
        <begin position="1" status="less than"/>
        <end position="121"/>
    </location>
</feature>
<feature type="non-terminal residue">
    <location>
        <position position="1"/>
    </location>
</feature>
<proteinExistence type="inferred from homology"/>
<organism>
    <name type="scientific">Vicia faba</name>
    <name type="common">Broad bean</name>
    <name type="synonym">Faba vulgaris</name>
    <dbReference type="NCBI Taxonomy" id="3906"/>
    <lineage>
        <taxon>Eukaryota</taxon>
        <taxon>Viridiplantae</taxon>
        <taxon>Streptophyta</taxon>
        <taxon>Embryophyta</taxon>
        <taxon>Tracheophyta</taxon>
        <taxon>Spermatophyta</taxon>
        <taxon>Magnoliopsida</taxon>
        <taxon>eudicotyledons</taxon>
        <taxon>Gunneridae</taxon>
        <taxon>Pentapetalae</taxon>
        <taxon>rosids</taxon>
        <taxon>fabids</taxon>
        <taxon>Fabales</taxon>
        <taxon>Fabaceae</taxon>
        <taxon>Papilionoideae</taxon>
        <taxon>50 kb inversion clade</taxon>
        <taxon>NPAAA clade</taxon>
        <taxon>Hologalegina</taxon>
        <taxon>IRL clade</taxon>
        <taxon>Fabeae</taxon>
        <taxon>Vicia</taxon>
    </lineage>
</organism>
<gene>
    <name type="primary">ycf2</name>
</gene>
<evidence type="ECO:0000250" key="1"/>
<evidence type="ECO:0000305" key="2"/>
<reference key="1">
    <citation type="journal article" date="1990" name="Nucleic Acids Res.">
        <title>Sequence of the trnH gene and the inverted repeat structure deletion site of the broad bean chloroplast genome.</title>
        <authorList>
            <person name="Herdenberger F."/>
            <person name="Pillay D.T.N."/>
            <person name="Steinmetz A."/>
        </authorList>
    </citation>
    <scope>NUCLEOTIDE SEQUENCE [GENOMIC DNA]</scope>
</reference>
<reference key="2">
    <citation type="journal article" date="1988" name="Curr. Genet.">
        <title>Organization and nucleotide sequence of the broad bean chloroplast genes trnL-UAG, ndhF and two unidentified open reading frames.</title>
        <authorList>
            <person name="Herdenberger F."/>
            <person name="Weil J.H."/>
            <person name="Steinmetz A."/>
        </authorList>
    </citation>
    <scope>NUCLEOTIDE SEQUENCE [GENOMIC DNA]</scope>
</reference>
<name>YCF2_VICFA</name>
<dbReference type="EMBL" id="X51471">
    <property type="protein sequence ID" value="CAA35832.1"/>
    <property type="molecule type" value="Genomic_DNA"/>
</dbReference>
<dbReference type="PIR" id="S08496">
    <property type="entry name" value="S08496"/>
</dbReference>
<dbReference type="SMR" id="P15821"/>
<dbReference type="GO" id="GO:0009570">
    <property type="term" value="C:chloroplast stroma"/>
    <property type="evidence" value="ECO:0007669"/>
    <property type="project" value="UniProtKB-SubCell"/>
</dbReference>
<dbReference type="GO" id="GO:0005524">
    <property type="term" value="F:ATP binding"/>
    <property type="evidence" value="ECO:0007669"/>
    <property type="project" value="UniProtKB-KW"/>
</dbReference>
<dbReference type="PANTHER" id="PTHR33078:SF92">
    <property type="entry name" value="PROTEIN YCF2"/>
    <property type="match status" value="1"/>
</dbReference>
<dbReference type="PANTHER" id="PTHR33078">
    <property type="entry name" value="PROTEIN YCF2-RELATED"/>
    <property type="match status" value="1"/>
</dbReference>
<protein>
    <recommendedName>
        <fullName>Protein Ycf2</fullName>
    </recommendedName>
</protein>
<accession>P15821</accession>